<reference key="1">
    <citation type="journal article" date="2006" name="PLoS Genet.">
        <title>The complete genome sequence and comparative genome analysis of the high pathogenicity Yersinia enterocolitica strain 8081.</title>
        <authorList>
            <person name="Thomson N.R."/>
            <person name="Howard S."/>
            <person name="Wren B.W."/>
            <person name="Holden M.T.G."/>
            <person name="Crossman L."/>
            <person name="Challis G.L."/>
            <person name="Churcher C."/>
            <person name="Mungall K."/>
            <person name="Brooks K."/>
            <person name="Chillingworth T."/>
            <person name="Feltwell T."/>
            <person name="Abdellah Z."/>
            <person name="Hauser H."/>
            <person name="Jagels K."/>
            <person name="Maddison M."/>
            <person name="Moule S."/>
            <person name="Sanders M."/>
            <person name="Whitehead S."/>
            <person name="Quail M.A."/>
            <person name="Dougan G."/>
            <person name="Parkhill J."/>
            <person name="Prentice M.B."/>
        </authorList>
    </citation>
    <scope>NUCLEOTIDE SEQUENCE [LARGE SCALE GENOMIC DNA]</scope>
    <source>
        <strain>NCTC 13174 / 8081</strain>
    </source>
</reference>
<gene>
    <name evidence="1" type="primary">metE</name>
    <name type="ordered locus">YE0249</name>
</gene>
<proteinExistence type="inferred from homology"/>
<dbReference type="EC" id="2.1.1.14" evidence="1"/>
<dbReference type="EMBL" id="AM286415">
    <property type="protein sequence ID" value="CAL10383.1"/>
    <property type="molecule type" value="Genomic_DNA"/>
</dbReference>
<dbReference type="RefSeq" id="WP_005176312.1">
    <property type="nucleotide sequence ID" value="NC_008800.1"/>
</dbReference>
<dbReference type="RefSeq" id="YP_001004635.1">
    <property type="nucleotide sequence ID" value="NC_008800.1"/>
</dbReference>
<dbReference type="SMR" id="A1JIE5"/>
<dbReference type="KEGG" id="yen:YE0249"/>
<dbReference type="PATRIC" id="fig|393305.7.peg.341"/>
<dbReference type="eggNOG" id="COG0620">
    <property type="taxonomic scope" value="Bacteria"/>
</dbReference>
<dbReference type="HOGENOM" id="CLU_013175_0_0_6"/>
<dbReference type="OrthoDB" id="244285at2"/>
<dbReference type="UniPathway" id="UPA00051">
    <property type="reaction ID" value="UER00082"/>
</dbReference>
<dbReference type="Proteomes" id="UP000000642">
    <property type="component" value="Chromosome"/>
</dbReference>
<dbReference type="GO" id="GO:0003871">
    <property type="term" value="F:5-methyltetrahydropteroyltriglutamate-homocysteine S-methyltransferase activity"/>
    <property type="evidence" value="ECO:0007669"/>
    <property type="project" value="UniProtKB-UniRule"/>
</dbReference>
<dbReference type="GO" id="GO:0008270">
    <property type="term" value="F:zinc ion binding"/>
    <property type="evidence" value="ECO:0007669"/>
    <property type="project" value="InterPro"/>
</dbReference>
<dbReference type="GO" id="GO:0009086">
    <property type="term" value="P:methionine biosynthetic process"/>
    <property type="evidence" value="ECO:0007669"/>
    <property type="project" value="UniProtKB-UniRule"/>
</dbReference>
<dbReference type="GO" id="GO:0032259">
    <property type="term" value="P:methylation"/>
    <property type="evidence" value="ECO:0007669"/>
    <property type="project" value="UniProtKB-KW"/>
</dbReference>
<dbReference type="CDD" id="cd03311">
    <property type="entry name" value="CIMS_C_terminal_like"/>
    <property type="match status" value="1"/>
</dbReference>
<dbReference type="CDD" id="cd03312">
    <property type="entry name" value="CIMS_N_terminal_like"/>
    <property type="match status" value="1"/>
</dbReference>
<dbReference type="FunFam" id="3.20.20.210:FF:000002">
    <property type="entry name" value="5-methyltetrahydropteroyltriglutamate--homocysteine methyltransferase"/>
    <property type="match status" value="1"/>
</dbReference>
<dbReference type="FunFam" id="3.20.20.210:FF:000003">
    <property type="entry name" value="5-methyltetrahydropteroyltriglutamate--homocysteine methyltransferase"/>
    <property type="match status" value="1"/>
</dbReference>
<dbReference type="Gene3D" id="3.20.20.210">
    <property type="match status" value="2"/>
</dbReference>
<dbReference type="HAMAP" id="MF_00172">
    <property type="entry name" value="Meth_synth"/>
    <property type="match status" value="1"/>
</dbReference>
<dbReference type="InterPro" id="IPR013215">
    <property type="entry name" value="Cbl-indep_Met_Synth_N"/>
</dbReference>
<dbReference type="InterPro" id="IPR006276">
    <property type="entry name" value="Cobalamin-indep_Met_synthase"/>
</dbReference>
<dbReference type="InterPro" id="IPR002629">
    <property type="entry name" value="Met_Synth_C/arc"/>
</dbReference>
<dbReference type="InterPro" id="IPR038071">
    <property type="entry name" value="UROD/MetE-like_sf"/>
</dbReference>
<dbReference type="NCBIfam" id="TIGR01371">
    <property type="entry name" value="met_syn_B12ind"/>
    <property type="match status" value="1"/>
</dbReference>
<dbReference type="NCBIfam" id="NF003556">
    <property type="entry name" value="PRK05222.1"/>
    <property type="match status" value="1"/>
</dbReference>
<dbReference type="PANTHER" id="PTHR30519">
    <property type="entry name" value="5-METHYLTETRAHYDROPTEROYLTRIGLUTAMATE--HOMOCYSTEINE METHYLTRANSFERASE"/>
    <property type="match status" value="1"/>
</dbReference>
<dbReference type="Pfam" id="PF08267">
    <property type="entry name" value="Meth_synt_1"/>
    <property type="match status" value="1"/>
</dbReference>
<dbReference type="Pfam" id="PF01717">
    <property type="entry name" value="Meth_synt_2"/>
    <property type="match status" value="1"/>
</dbReference>
<dbReference type="PIRSF" id="PIRSF000382">
    <property type="entry name" value="MeTrfase_B12_ind"/>
    <property type="match status" value="1"/>
</dbReference>
<dbReference type="SUPFAM" id="SSF51726">
    <property type="entry name" value="UROD/MetE-like"/>
    <property type="match status" value="2"/>
</dbReference>
<feature type="chain" id="PRO_1000017293" description="5-methyltetrahydropteroyltriglutamate--homocysteine methyltransferase">
    <location>
        <begin position="1"/>
        <end position="758"/>
    </location>
</feature>
<feature type="active site" description="Proton donor" evidence="1">
    <location>
        <position position="697"/>
    </location>
</feature>
<feature type="binding site" evidence="1">
    <location>
        <begin position="17"/>
        <end position="20"/>
    </location>
    <ligand>
        <name>5-methyltetrahydropteroyltri-L-glutamate</name>
        <dbReference type="ChEBI" id="CHEBI:58207"/>
    </ligand>
</feature>
<feature type="binding site" evidence="1">
    <location>
        <position position="117"/>
    </location>
    <ligand>
        <name>5-methyltetrahydropteroyltri-L-glutamate</name>
        <dbReference type="ChEBI" id="CHEBI:58207"/>
    </ligand>
</feature>
<feature type="binding site" evidence="1">
    <location>
        <begin position="434"/>
        <end position="436"/>
    </location>
    <ligand>
        <name>L-homocysteine</name>
        <dbReference type="ChEBI" id="CHEBI:58199"/>
    </ligand>
</feature>
<feature type="binding site" evidence="1">
    <location>
        <begin position="434"/>
        <end position="436"/>
    </location>
    <ligand>
        <name>L-methionine</name>
        <dbReference type="ChEBI" id="CHEBI:57844"/>
    </ligand>
</feature>
<feature type="binding site" evidence="1">
    <location>
        <position position="487"/>
    </location>
    <ligand>
        <name>L-homocysteine</name>
        <dbReference type="ChEBI" id="CHEBI:58199"/>
    </ligand>
</feature>
<feature type="binding site" evidence="1">
    <location>
        <position position="487"/>
    </location>
    <ligand>
        <name>L-methionine</name>
        <dbReference type="ChEBI" id="CHEBI:57844"/>
    </ligand>
</feature>
<feature type="binding site" evidence="1">
    <location>
        <begin position="518"/>
        <end position="519"/>
    </location>
    <ligand>
        <name>5-methyltetrahydropteroyltri-L-glutamate</name>
        <dbReference type="ChEBI" id="CHEBI:58207"/>
    </ligand>
</feature>
<feature type="binding site" evidence="1">
    <location>
        <position position="564"/>
    </location>
    <ligand>
        <name>5-methyltetrahydropteroyltri-L-glutamate</name>
        <dbReference type="ChEBI" id="CHEBI:58207"/>
    </ligand>
</feature>
<feature type="binding site" evidence="1">
    <location>
        <position position="602"/>
    </location>
    <ligand>
        <name>L-homocysteine</name>
        <dbReference type="ChEBI" id="CHEBI:58199"/>
    </ligand>
</feature>
<feature type="binding site" evidence="1">
    <location>
        <position position="602"/>
    </location>
    <ligand>
        <name>L-methionine</name>
        <dbReference type="ChEBI" id="CHEBI:57844"/>
    </ligand>
</feature>
<feature type="binding site" evidence="1">
    <location>
        <position position="608"/>
    </location>
    <ligand>
        <name>5-methyltetrahydropteroyltri-L-glutamate</name>
        <dbReference type="ChEBI" id="CHEBI:58207"/>
    </ligand>
</feature>
<feature type="binding site" evidence="1">
    <location>
        <position position="644"/>
    </location>
    <ligand>
        <name>Zn(2+)</name>
        <dbReference type="ChEBI" id="CHEBI:29105"/>
        <note>catalytic</note>
    </ligand>
</feature>
<feature type="binding site" evidence="1">
    <location>
        <position position="646"/>
    </location>
    <ligand>
        <name>Zn(2+)</name>
        <dbReference type="ChEBI" id="CHEBI:29105"/>
        <note>catalytic</note>
    </ligand>
</feature>
<feature type="binding site" evidence="1">
    <location>
        <position position="668"/>
    </location>
    <ligand>
        <name>Zn(2+)</name>
        <dbReference type="ChEBI" id="CHEBI:29105"/>
        <note>catalytic</note>
    </ligand>
</feature>
<feature type="binding site" evidence="1">
    <location>
        <position position="729"/>
    </location>
    <ligand>
        <name>Zn(2+)</name>
        <dbReference type="ChEBI" id="CHEBI:29105"/>
        <note>catalytic</note>
    </ligand>
</feature>
<name>METE_YERE8</name>
<sequence>MTILNHTLGFPRVGLKRELKKAQESYWAGNSTQEELLNVGRELRARHWQQQQQAGVDLVPVGDFAWYDHVLTTSLLLGNVPERHQNADGSIDLDTLFRIGRGRAPTGTPAAAAEMTKWFNTNYHYMVPEFQQGQQFKLGWTQLLDEVDEALALGHKIKPVLLGPVTYLWLGKVKGEQFDRLSLLKDILPVYQQVLGELAKRGIEWVQIDEPALVLELPPEWLDAYQPAYQALQGQVKLLLTTYFDSIGHNLDTIRALPVQGLHVDVVAGQDDIAKLNAKLPQEWLLSLGVINGRNVWRADLSHWFERLQPLVNSRPLWLGSSCSLLHSPIDLSEETRLDAEVKSWFAFALQKCAELALLTQALNAPSEAKLAELAAYSAPIRARRASSRVHNPQVEQRLAAITAQDIERQQPYEARAAAQRKRFNLPAWPTTTIGSFPQTTEIRGLRLDFKQGRLDGKNYRTGISEHIKQAIAEQERLGLDVLVHGEAERNDMVEYFGEHLDGFVFTQNGWVQSYGSRCVKPPVIIGDISRPEAITVEWAKYAQSLTDKPVKGMLTGPVTILCWSFPREDVSRETIAKQIALALRDEVEDLEKAGIGIIQIDEPALREGLPLRRADWQAYLQWAVDAFKLNAAVAQNDTQIHTHMCYCEFNDIMDSIAALDADVITIETSRSDMELLESFEDFAYPNEIGPGVYDIHSPNVPSVEWIEALLRKAAQRIPAERLWVNPDCGLKTRGWPETRQALANMVLAAQRLREEQV</sequence>
<comment type="function">
    <text evidence="1">Catalyzes the transfer of a methyl group from 5-methyltetrahydrofolate to homocysteine resulting in methionine formation.</text>
</comment>
<comment type="catalytic activity">
    <reaction evidence="1">
        <text>5-methyltetrahydropteroyltri-L-glutamate + L-homocysteine = tetrahydropteroyltri-L-glutamate + L-methionine</text>
        <dbReference type="Rhea" id="RHEA:21196"/>
        <dbReference type="ChEBI" id="CHEBI:57844"/>
        <dbReference type="ChEBI" id="CHEBI:58140"/>
        <dbReference type="ChEBI" id="CHEBI:58199"/>
        <dbReference type="ChEBI" id="CHEBI:58207"/>
        <dbReference type="EC" id="2.1.1.14"/>
    </reaction>
</comment>
<comment type="cofactor">
    <cofactor evidence="1">
        <name>Zn(2+)</name>
        <dbReference type="ChEBI" id="CHEBI:29105"/>
    </cofactor>
    <text evidence="1">Binds 1 zinc ion per subunit.</text>
</comment>
<comment type="pathway">
    <text evidence="1">Amino-acid biosynthesis; L-methionine biosynthesis via de novo pathway; L-methionine from L-homocysteine (MetE route): step 1/1.</text>
</comment>
<comment type="similarity">
    <text evidence="1">Belongs to the vitamin-B12 independent methionine synthase family.</text>
</comment>
<evidence type="ECO:0000255" key="1">
    <source>
        <dbReference type="HAMAP-Rule" id="MF_00172"/>
    </source>
</evidence>
<accession>A1JIE5</accession>
<keyword id="KW-0028">Amino-acid biosynthesis</keyword>
<keyword id="KW-0479">Metal-binding</keyword>
<keyword id="KW-0486">Methionine biosynthesis</keyword>
<keyword id="KW-0489">Methyltransferase</keyword>
<keyword id="KW-0677">Repeat</keyword>
<keyword id="KW-0808">Transferase</keyword>
<keyword id="KW-0862">Zinc</keyword>
<protein>
    <recommendedName>
        <fullName evidence="1">5-methyltetrahydropteroyltriglutamate--homocysteine methyltransferase</fullName>
        <ecNumber evidence="1">2.1.1.14</ecNumber>
    </recommendedName>
    <alternativeName>
        <fullName evidence="1">Cobalamin-independent methionine synthase</fullName>
    </alternativeName>
    <alternativeName>
        <fullName evidence="1">Methionine synthase, vitamin-B12 independent isozyme</fullName>
    </alternativeName>
</protein>
<organism>
    <name type="scientific">Yersinia enterocolitica serotype O:8 / biotype 1B (strain NCTC 13174 / 8081)</name>
    <dbReference type="NCBI Taxonomy" id="393305"/>
    <lineage>
        <taxon>Bacteria</taxon>
        <taxon>Pseudomonadati</taxon>
        <taxon>Pseudomonadota</taxon>
        <taxon>Gammaproteobacteria</taxon>
        <taxon>Enterobacterales</taxon>
        <taxon>Yersiniaceae</taxon>
        <taxon>Yersinia</taxon>
    </lineage>
</organism>